<sequence>MLDSIKIKLQYLLPKQGLTQLAGWGANKQGGWLTQLVIKAFARYYKVDMKEAQDPEFSAYRTFNEFFVRPLRAGVRPVVAEENLLAQPADGAISQLGAIREGQILQAKGHNYSLEALLAGNYLLAAEFQNGQFVTTYLAPRDYHRVHMPCDGVLREMIYVPGDLFSVNPLTAANVPNLFARNERVICIFDTAFGPMAQILVGATIVGSIETVWAGTITPPREGVIRRWTYPQAGCEGAITLEKGQEMGRFKLGSTVINLFAEGKVYFAPQLNSGAVTRMGEVLAEAVPTTPSY</sequence>
<organism>
    <name type="scientific">Yersinia pestis (strain Pestoides F)</name>
    <dbReference type="NCBI Taxonomy" id="386656"/>
    <lineage>
        <taxon>Bacteria</taxon>
        <taxon>Pseudomonadati</taxon>
        <taxon>Pseudomonadota</taxon>
        <taxon>Gammaproteobacteria</taxon>
        <taxon>Enterobacterales</taxon>
        <taxon>Yersiniaceae</taxon>
        <taxon>Yersinia</taxon>
    </lineage>
</organism>
<gene>
    <name evidence="1" type="primary">psd</name>
    <name type="ordered locus">YPDSF_3611</name>
</gene>
<comment type="function">
    <text evidence="1">Catalyzes the formation of phosphatidylethanolamine (PtdEtn) from phosphatidylserine (PtdSer).</text>
</comment>
<comment type="catalytic activity">
    <reaction evidence="1">
        <text>a 1,2-diacyl-sn-glycero-3-phospho-L-serine + H(+) = a 1,2-diacyl-sn-glycero-3-phosphoethanolamine + CO2</text>
        <dbReference type="Rhea" id="RHEA:20828"/>
        <dbReference type="ChEBI" id="CHEBI:15378"/>
        <dbReference type="ChEBI" id="CHEBI:16526"/>
        <dbReference type="ChEBI" id="CHEBI:57262"/>
        <dbReference type="ChEBI" id="CHEBI:64612"/>
        <dbReference type="EC" id="4.1.1.65"/>
    </reaction>
</comment>
<comment type="cofactor">
    <cofactor evidence="1">
        <name>pyruvate</name>
        <dbReference type="ChEBI" id="CHEBI:15361"/>
    </cofactor>
    <text evidence="1">Binds 1 pyruvoyl group covalently per subunit.</text>
</comment>
<comment type="pathway">
    <text evidence="1">Phospholipid metabolism; phosphatidylethanolamine biosynthesis; phosphatidylethanolamine from CDP-diacylglycerol: step 2/2.</text>
</comment>
<comment type="subunit">
    <text evidence="1">Heterodimer of a large membrane-associated beta subunit and a small pyruvoyl-containing alpha subunit.</text>
</comment>
<comment type="subcellular location">
    <subcellularLocation>
        <location evidence="1">Cell membrane</location>
        <topology evidence="1">Peripheral membrane protein</topology>
    </subcellularLocation>
</comment>
<comment type="PTM">
    <text evidence="1">Is synthesized initially as an inactive proenzyme. Formation of the active enzyme involves a self-maturation process in which the active site pyruvoyl group is generated from an internal serine residue via an autocatalytic post-translational modification. Two non-identical subunits are generated from the proenzyme in this reaction, and the pyruvate is formed at the N-terminus of the alpha chain, which is derived from the carboxyl end of the proenzyme. The autoendoproteolytic cleavage occurs by a canonical serine protease mechanism, in which the side chain hydroxyl group of the serine supplies its oxygen atom to form the C-terminus of the beta chain, while the remainder of the serine residue undergoes an oxidative deamination to produce ammonia and the pyruvoyl prosthetic group on the alpha chain. During this reaction, the Ser that is part of the protease active site of the proenzyme becomes the pyruvoyl prosthetic group, which constitutes an essential element of the active site of the mature decarboxylase.</text>
</comment>
<comment type="similarity">
    <text evidence="1">Belongs to the phosphatidylserine decarboxylase family. PSD-B subfamily. Prokaryotic type I sub-subfamily.</text>
</comment>
<feature type="chain" id="PRO_1000026600" description="Phosphatidylserine decarboxylase beta chain" evidence="1">
    <location>
        <begin position="1"/>
        <end position="253"/>
    </location>
</feature>
<feature type="chain" id="PRO_1000026601" description="Phosphatidylserine decarboxylase alpha chain" evidence="1">
    <location>
        <begin position="254"/>
        <end position="293"/>
    </location>
</feature>
<feature type="active site" description="Charge relay system; for autoendoproteolytic cleavage activity" evidence="1">
    <location>
        <position position="90"/>
    </location>
</feature>
<feature type="active site" description="Charge relay system; for autoendoproteolytic cleavage activity" evidence="1">
    <location>
        <position position="147"/>
    </location>
</feature>
<feature type="active site" description="Charge relay system; for autoendoproteolytic cleavage activity" evidence="1">
    <location>
        <position position="254"/>
    </location>
</feature>
<feature type="active site" description="Schiff-base intermediate with substrate; via pyruvic acid; for decarboxylase activity" evidence="1">
    <location>
        <position position="254"/>
    </location>
</feature>
<feature type="site" description="Cleavage (non-hydrolytic); by autocatalysis" evidence="1">
    <location>
        <begin position="253"/>
        <end position="254"/>
    </location>
</feature>
<feature type="modified residue" description="Pyruvic acid (Ser); by autocatalysis" evidence="1">
    <location>
        <position position="254"/>
    </location>
</feature>
<name>PSD_YERPP</name>
<reference key="1">
    <citation type="submission" date="2007-02" db="EMBL/GenBank/DDBJ databases">
        <title>Complete sequence of chromosome of Yersinia pestis Pestoides F.</title>
        <authorList>
            <consortium name="US DOE Joint Genome Institute"/>
            <person name="Copeland A."/>
            <person name="Lucas S."/>
            <person name="Lapidus A."/>
            <person name="Barry K."/>
            <person name="Detter J.C."/>
            <person name="Glavina del Rio T."/>
            <person name="Hammon N."/>
            <person name="Israni S."/>
            <person name="Dalin E."/>
            <person name="Tice H."/>
            <person name="Pitluck S."/>
            <person name="Di Bartolo G."/>
            <person name="Chain P."/>
            <person name="Malfatti S."/>
            <person name="Shin M."/>
            <person name="Vergez L."/>
            <person name="Schmutz J."/>
            <person name="Larimer F."/>
            <person name="Land M."/>
            <person name="Hauser L."/>
            <person name="Worsham P."/>
            <person name="Chu M."/>
            <person name="Bearden S."/>
            <person name="Garcia E."/>
            <person name="Richardson P."/>
        </authorList>
    </citation>
    <scope>NUCLEOTIDE SEQUENCE [LARGE SCALE GENOMIC DNA]</scope>
    <source>
        <strain>Pestoides F</strain>
    </source>
</reference>
<protein>
    <recommendedName>
        <fullName evidence="1">Phosphatidylserine decarboxylase proenzyme</fullName>
        <ecNumber evidence="1">4.1.1.65</ecNumber>
    </recommendedName>
    <component>
        <recommendedName>
            <fullName evidence="1">Phosphatidylserine decarboxylase alpha chain</fullName>
        </recommendedName>
    </component>
    <component>
        <recommendedName>
            <fullName evidence="1">Phosphatidylserine decarboxylase beta chain</fullName>
        </recommendedName>
    </component>
</protein>
<accession>A4TRP9</accession>
<evidence type="ECO:0000255" key="1">
    <source>
        <dbReference type="HAMAP-Rule" id="MF_00662"/>
    </source>
</evidence>
<dbReference type="EC" id="4.1.1.65" evidence="1"/>
<dbReference type="EMBL" id="CP000668">
    <property type="protein sequence ID" value="ABP41961.1"/>
    <property type="molecule type" value="Genomic_DNA"/>
</dbReference>
<dbReference type="SMR" id="A4TRP9"/>
<dbReference type="KEGG" id="ypp:YPDSF_3611"/>
<dbReference type="PATRIC" id="fig|386656.14.peg.270"/>
<dbReference type="UniPathway" id="UPA00558">
    <property type="reaction ID" value="UER00616"/>
</dbReference>
<dbReference type="GO" id="GO:0005886">
    <property type="term" value="C:plasma membrane"/>
    <property type="evidence" value="ECO:0007669"/>
    <property type="project" value="UniProtKB-SubCell"/>
</dbReference>
<dbReference type="GO" id="GO:0004609">
    <property type="term" value="F:phosphatidylserine decarboxylase activity"/>
    <property type="evidence" value="ECO:0007669"/>
    <property type="project" value="UniProtKB-UniRule"/>
</dbReference>
<dbReference type="GO" id="GO:0006646">
    <property type="term" value="P:phosphatidylethanolamine biosynthetic process"/>
    <property type="evidence" value="ECO:0007669"/>
    <property type="project" value="UniProtKB-UniRule"/>
</dbReference>
<dbReference type="HAMAP" id="MF_00662">
    <property type="entry name" value="PS_decarb_PSD_B_type1"/>
    <property type="match status" value="1"/>
</dbReference>
<dbReference type="InterPro" id="IPR003817">
    <property type="entry name" value="PS_Dcarbxylase"/>
</dbReference>
<dbReference type="InterPro" id="IPR033177">
    <property type="entry name" value="PSD-B"/>
</dbReference>
<dbReference type="InterPro" id="IPR033178">
    <property type="entry name" value="PSD_type1_pro"/>
</dbReference>
<dbReference type="NCBIfam" id="TIGR00163">
    <property type="entry name" value="PS_decarb"/>
    <property type="match status" value="1"/>
</dbReference>
<dbReference type="PANTHER" id="PTHR10067">
    <property type="entry name" value="PHOSPHATIDYLSERINE DECARBOXYLASE"/>
    <property type="match status" value="1"/>
</dbReference>
<dbReference type="PANTHER" id="PTHR10067:SF6">
    <property type="entry name" value="PHOSPHATIDYLSERINE DECARBOXYLASE PROENZYME, MITOCHONDRIAL"/>
    <property type="match status" value="1"/>
</dbReference>
<dbReference type="Pfam" id="PF02666">
    <property type="entry name" value="PS_Dcarbxylase"/>
    <property type="match status" value="1"/>
</dbReference>
<keyword id="KW-1003">Cell membrane</keyword>
<keyword id="KW-0210">Decarboxylase</keyword>
<keyword id="KW-0444">Lipid biosynthesis</keyword>
<keyword id="KW-0443">Lipid metabolism</keyword>
<keyword id="KW-0456">Lyase</keyword>
<keyword id="KW-0472">Membrane</keyword>
<keyword id="KW-0594">Phospholipid biosynthesis</keyword>
<keyword id="KW-1208">Phospholipid metabolism</keyword>
<keyword id="KW-0670">Pyruvate</keyword>
<keyword id="KW-0865">Zymogen</keyword>
<proteinExistence type="inferred from homology"/>